<comment type="function">
    <text evidence="1">Alpha toxins bind voltage-independently at site-3 of sodium channels (Nav) and inhibit the inactivation of the activated channels, thereby blocking neuronal transmission.</text>
</comment>
<comment type="subcellular location">
    <subcellularLocation>
        <location evidence="3">Secreted</location>
    </subcellularLocation>
</comment>
<comment type="tissue specificity">
    <text evidence="6">Expressed by the venom gland.</text>
</comment>
<comment type="domain">
    <text evidence="5">Has the structural arrangement of an alpha-helix connected to antiparallel beta-sheets by disulfide bonds (CS-alpha/beta).</text>
</comment>
<comment type="similarity">
    <text evidence="5">Belongs to the long (4 C-C) scorpion toxin superfamily. Sodium channel inhibitor family. Alpha subfamily.</text>
</comment>
<comment type="caution">
    <text evidence="5">Zhu and Gao submitted another 'Neurotoxin MeuNaTx-6' in 2009, whose sequence highly differs from the one presented here (AC P86406).</text>
</comment>
<keyword id="KW-1015">Disulfide bond</keyword>
<keyword id="KW-0872">Ion channel impairing toxin</keyword>
<keyword id="KW-0528">Neurotoxin</keyword>
<keyword id="KW-0964">Secreted</keyword>
<keyword id="KW-0732">Signal</keyword>
<keyword id="KW-0800">Toxin</keyword>
<keyword id="KW-0738">Voltage-gated sodium channel impairing toxin</keyword>
<name>SCXN6_MESEU</name>
<proteinExistence type="evidence at transcript level"/>
<evidence type="ECO:0000250" key="1">
    <source>
        <dbReference type="UniProtKB" id="P86405"/>
    </source>
</evidence>
<evidence type="ECO:0000255" key="2">
    <source>
        <dbReference type="PROSITE-ProRule" id="PRU01210"/>
    </source>
</evidence>
<evidence type="ECO:0000269" key="3">
    <source>
    </source>
</evidence>
<evidence type="ECO:0000303" key="4">
    <source>
    </source>
</evidence>
<evidence type="ECO:0000305" key="5"/>
<evidence type="ECO:0000305" key="6">
    <source>
    </source>
</evidence>
<evidence type="ECO:0000312" key="7">
    <source>
        <dbReference type="EMBL" id="ADT82852.1"/>
    </source>
</evidence>
<feature type="signal peptide" evidence="5">
    <location>
        <begin position="1" status="less than"/>
        <end position="7"/>
    </location>
</feature>
<feature type="chain" id="PRO_0000447447" description="Sodium channel neurotoxin MeuNaTxalpha-6" evidence="6">
    <location>
        <begin position="8"/>
        <end position="73"/>
    </location>
</feature>
<feature type="propeptide" id="PRO_0000447448" description="Removed by a carboxypeptidase" evidence="5">
    <location>
        <position position="74"/>
    </location>
</feature>
<feature type="domain" description="LCN-type CS-alpha/beta" evidence="2">
    <location>
        <begin position="9"/>
        <end position="73"/>
    </location>
</feature>
<feature type="disulfide bond" evidence="1">
    <location>
        <begin position="19"/>
        <end position="72"/>
    </location>
</feature>
<feature type="disulfide bond" evidence="1">
    <location>
        <begin position="23"/>
        <end position="45"/>
    </location>
</feature>
<feature type="disulfide bond" evidence="1">
    <location>
        <begin position="31"/>
        <end position="55"/>
    </location>
</feature>
<feature type="disulfide bond" evidence="1">
    <location>
        <begin position="35"/>
        <end position="57"/>
    </location>
</feature>
<feature type="non-terminal residue" evidence="7">
    <location>
        <position position="1"/>
    </location>
</feature>
<organism>
    <name type="scientific">Mesobuthus eupeus</name>
    <name type="common">Lesser Asian scorpion</name>
    <name type="synonym">Buthus eupeus</name>
    <dbReference type="NCBI Taxonomy" id="34648"/>
    <lineage>
        <taxon>Eukaryota</taxon>
        <taxon>Metazoa</taxon>
        <taxon>Ecdysozoa</taxon>
        <taxon>Arthropoda</taxon>
        <taxon>Chelicerata</taxon>
        <taxon>Arachnida</taxon>
        <taxon>Scorpiones</taxon>
        <taxon>Buthida</taxon>
        <taxon>Buthoidea</taxon>
        <taxon>Buthidae</taxon>
        <taxon>Mesobuthus</taxon>
    </lineage>
</organism>
<protein>
    <recommendedName>
        <fullName evidence="4">Sodium channel neurotoxin MeuNaTxalpha-6</fullName>
    </recommendedName>
</protein>
<reference key="1">
    <citation type="journal article" date="2012" name="Mol. Cell. Proteomics">
        <title>Evolutionary diversification of Mesobuthus alpha-scorpion toxins affecting sodium channels.</title>
        <authorList>
            <person name="Zhu S."/>
            <person name="Peigneur S."/>
            <person name="Gao B."/>
            <person name="Lu X."/>
            <person name="Cao C."/>
            <person name="Tytgat J."/>
        </authorList>
    </citation>
    <scope>NUCLEOTIDE SEQUENCE [MRNA]</scope>
    <source>
        <tissue>Venom gland</tissue>
    </source>
</reference>
<dbReference type="EMBL" id="HM989912">
    <property type="protein sequence ID" value="ADT82852.1"/>
    <property type="molecule type" value="mRNA"/>
</dbReference>
<dbReference type="SMR" id="E7CZY9"/>
<dbReference type="GO" id="GO:0005576">
    <property type="term" value="C:extracellular region"/>
    <property type="evidence" value="ECO:0007669"/>
    <property type="project" value="UniProtKB-SubCell"/>
</dbReference>
<dbReference type="GO" id="GO:0019871">
    <property type="term" value="F:sodium channel inhibitor activity"/>
    <property type="evidence" value="ECO:0007669"/>
    <property type="project" value="InterPro"/>
</dbReference>
<dbReference type="GO" id="GO:0090729">
    <property type="term" value="F:toxin activity"/>
    <property type="evidence" value="ECO:0007669"/>
    <property type="project" value="UniProtKB-KW"/>
</dbReference>
<dbReference type="GO" id="GO:0006952">
    <property type="term" value="P:defense response"/>
    <property type="evidence" value="ECO:0007669"/>
    <property type="project" value="InterPro"/>
</dbReference>
<dbReference type="CDD" id="cd23106">
    <property type="entry name" value="neurotoxins_LC_scorpion"/>
    <property type="match status" value="1"/>
</dbReference>
<dbReference type="FunFam" id="3.30.30.10:FF:000002">
    <property type="entry name" value="Alpha-like toxin BmK-M1"/>
    <property type="match status" value="1"/>
</dbReference>
<dbReference type="Gene3D" id="3.30.30.10">
    <property type="entry name" value="Knottin, scorpion toxin-like"/>
    <property type="match status" value="1"/>
</dbReference>
<dbReference type="InterPro" id="IPR044062">
    <property type="entry name" value="LCN-type_CS_alpha_beta_dom"/>
</dbReference>
<dbReference type="InterPro" id="IPR003614">
    <property type="entry name" value="Scorpion_toxin-like"/>
</dbReference>
<dbReference type="InterPro" id="IPR036574">
    <property type="entry name" value="Scorpion_toxin-like_sf"/>
</dbReference>
<dbReference type="InterPro" id="IPR018218">
    <property type="entry name" value="Scorpion_toxinL"/>
</dbReference>
<dbReference type="InterPro" id="IPR002061">
    <property type="entry name" value="Scorpion_toxinL/defensin"/>
</dbReference>
<dbReference type="Pfam" id="PF00537">
    <property type="entry name" value="Toxin_3"/>
    <property type="match status" value="1"/>
</dbReference>
<dbReference type="PRINTS" id="PR00285">
    <property type="entry name" value="SCORPNTOXIN"/>
</dbReference>
<dbReference type="SMART" id="SM00505">
    <property type="entry name" value="Knot1"/>
    <property type="match status" value="1"/>
</dbReference>
<dbReference type="SUPFAM" id="SSF57095">
    <property type="entry name" value="Scorpion toxin-like"/>
    <property type="match status" value="1"/>
</dbReference>
<dbReference type="PROSITE" id="PS51863">
    <property type="entry name" value="LCN_CSAB"/>
    <property type="match status" value="1"/>
</dbReference>
<accession>E7CZY9</accession>
<sequence length="74" mass="7995">LMTGVESARDAYIAKPHNCVYECFDAFSSYCNGVCTKNGAKSGYCQILGTYGNGCWCIALPGNVPIRIPGKCHR</sequence>